<comment type="function">
    <text evidence="2 4">Catalyzes the S-methylation of thiopurine drugs such as 6-mercaptopurine (also called mercaptopurine, 6-MP or its brand name Purinethol) using S-adenosyl-L-methionine as the methyl donor (PubMed:18484748). TPMT activity modulates the cytotoxic effects of thiopurine prodrugs. A natural substrate for this enzyme has yet to be identified.</text>
</comment>
<comment type="catalytic activity">
    <reaction evidence="2">
        <text>S-adenosyl-L-methionine + a thiopurine = S-adenosyl-L-homocysteine + a thiopurine S-methylether.</text>
        <dbReference type="EC" id="2.1.1.67"/>
    </reaction>
</comment>
<comment type="catalytic activity">
    <reaction evidence="2">
        <text>mercaptopurine + S-adenosyl-L-methionine = 6-methylthiopurine + S-adenosyl-L-homocysteine + H(+)</text>
        <dbReference type="Rhea" id="RHEA:12609"/>
        <dbReference type="ChEBI" id="CHEBI:15378"/>
        <dbReference type="ChEBI" id="CHEBI:28279"/>
        <dbReference type="ChEBI" id="CHEBI:50667"/>
        <dbReference type="ChEBI" id="CHEBI:57856"/>
        <dbReference type="ChEBI" id="CHEBI:59789"/>
        <dbReference type="EC" id="2.1.1.67"/>
    </reaction>
</comment>
<comment type="biophysicochemical properties">
    <kinetics>
        <KM evidence="2">5.6 uM for S-adenosyl-L-methionine (at pH 6.5 and 37 degrees Celsius)</KM>
        <KM evidence="2">0.35 mM for 6-mercaptopurine (at pH 6.5 and 37 degrees Celsius)</KM>
        <Vmax evidence="2">0.604 nmol/sec/mg enzyme toward 6-mercaptopurine (at pH 6.5 and 37 degrees Celsius)</Vmax>
    </kinetics>
</comment>
<comment type="subunit">
    <text evidence="2">Monomer.</text>
</comment>
<comment type="subcellular location">
    <subcellularLocation>
        <location>Cytoplasm</location>
    </subcellularLocation>
</comment>
<comment type="similarity">
    <text evidence="4">Belongs to the class I-like SAM-binding methyltransferase superfamily. TPMT family.</text>
</comment>
<keyword id="KW-0002">3D-structure</keyword>
<keyword id="KW-0007">Acetylation</keyword>
<keyword id="KW-0963">Cytoplasm</keyword>
<keyword id="KW-0489">Methyltransferase</keyword>
<keyword id="KW-0597">Phosphoprotein</keyword>
<keyword id="KW-1185">Reference proteome</keyword>
<keyword id="KW-0949">S-adenosyl-L-methionine</keyword>
<keyword id="KW-0808">Transferase</keyword>
<proteinExistence type="evidence at protein level"/>
<feature type="chain" id="PRO_0000220105" description="Thiopurine S-methyltransferase">
    <location>
        <begin position="1"/>
        <end position="240"/>
    </location>
</feature>
<feature type="binding site">
    <location>
        <begin position="24"/>
        <end position="35"/>
    </location>
    <ligand>
        <name>S-adenosyl-L-methionine</name>
        <dbReference type="ChEBI" id="CHEBI:59789"/>
    </ligand>
</feature>
<feature type="binding site">
    <location>
        <position position="35"/>
    </location>
    <ligand>
        <name>substrate</name>
    </ligand>
</feature>
<feature type="binding site">
    <location>
        <position position="64"/>
    </location>
    <ligand>
        <name>S-adenosyl-L-methionine</name>
        <dbReference type="ChEBI" id="CHEBI:59789"/>
    </ligand>
</feature>
<feature type="binding site">
    <location>
        <position position="85"/>
    </location>
    <ligand>
        <name>S-adenosyl-L-methionine</name>
        <dbReference type="ChEBI" id="CHEBI:59789"/>
    </ligand>
</feature>
<feature type="binding site">
    <location>
        <begin position="129"/>
        <end position="130"/>
    </location>
    <ligand>
        <name>S-adenosyl-L-methionine</name>
        <dbReference type="ChEBI" id="CHEBI:59789"/>
    </ligand>
</feature>
<feature type="binding site">
    <location>
        <position position="147"/>
    </location>
    <ligand>
        <name>S-adenosyl-L-methionine</name>
        <dbReference type="ChEBI" id="CHEBI:59789"/>
    </ligand>
</feature>
<feature type="modified residue" description="Phosphoserine" evidence="5">
    <location>
        <position position="34"/>
    </location>
</feature>
<feature type="modified residue" description="N6-acetyllysine" evidence="1">
    <location>
        <position position="53"/>
    </location>
</feature>
<feature type="sequence variant" description="In strain: C57BL/6J.">
    <original>I</original>
    <variation>V</variation>
    <location>
        <position position="69"/>
    </location>
</feature>
<feature type="turn" evidence="6">
    <location>
        <begin position="11"/>
        <end position="16"/>
    </location>
</feature>
<feature type="helix" evidence="6">
    <location>
        <begin position="21"/>
        <end position="30"/>
    </location>
</feature>
<feature type="strand" evidence="8">
    <location>
        <begin position="38"/>
        <end position="40"/>
    </location>
</feature>
<feature type="helix" evidence="6">
    <location>
        <begin position="42"/>
        <end position="52"/>
    </location>
</feature>
<feature type="strand" evidence="6">
    <location>
        <begin position="59"/>
        <end position="62"/>
    </location>
</feature>
<feature type="helix" evidence="6">
    <location>
        <begin position="70"/>
        <end position="76"/>
    </location>
</feature>
<feature type="strand" evidence="6">
    <location>
        <begin position="80"/>
        <end position="84"/>
    </location>
</feature>
<feature type="helix" evidence="6">
    <location>
        <begin position="88"/>
        <end position="97"/>
    </location>
</feature>
<feature type="strand" evidence="6">
    <location>
        <begin position="102"/>
        <end position="106"/>
    </location>
</feature>
<feature type="strand" evidence="6">
    <location>
        <begin position="114"/>
        <end position="118"/>
    </location>
</feature>
<feature type="strand" evidence="6">
    <location>
        <begin position="121"/>
        <end position="128"/>
    </location>
</feature>
<feature type="turn" evidence="6">
    <location>
        <begin position="130"/>
        <end position="132"/>
    </location>
</feature>
<feature type="helix" evidence="6">
    <location>
        <begin position="133"/>
        <end position="136"/>
    </location>
</feature>
<feature type="strand" evidence="6">
    <location>
        <begin position="141"/>
        <end position="149"/>
    </location>
</feature>
<feature type="turn" evidence="6">
    <location>
        <begin position="150"/>
        <end position="152"/>
    </location>
</feature>
<feature type="helix" evidence="6">
    <location>
        <begin position="155"/>
        <end position="157"/>
    </location>
</feature>
<feature type="helix" evidence="6">
    <location>
        <begin position="158"/>
        <end position="167"/>
    </location>
</feature>
<feature type="strand" evidence="6">
    <location>
        <begin position="169"/>
        <end position="181"/>
    </location>
</feature>
<feature type="helix" evidence="8">
    <location>
        <begin position="184"/>
        <end position="186"/>
    </location>
</feature>
<feature type="strand" evidence="7">
    <location>
        <begin position="189"/>
        <end position="191"/>
    </location>
</feature>
<feature type="helix" evidence="6">
    <location>
        <begin position="196"/>
        <end position="203"/>
    </location>
</feature>
<feature type="turn" evidence="6">
    <location>
        <begin position="204"/>
        <end position="206"/>
    </location>
</feature>
<feature type="strand" evidence="6">
    <location>
        <begin position="207"/>
        <end position="216"/>
    </location>
</feature>
<feature type="helix" evidence="6">
    <location>
        <begin position="220"/>
        <end position="222"/>
    </location>
</feature>
<feature type="turn" evidence="6">
    <location>
        <begin position="223"/>
        <end position="226"/>
    </location>
</feature>
<feature type="strand" evidence="6">
    <location>
        <begin position="231"/>
        <end position="239"/>
    </location>
</feature>
<reference key="1">
    <citation type="journal article" date="1998" name="FEBS Lett.">
        <title>Molecular cloning and functional characterization of the cDNA encoding the murine thiopurine S-methyltransferase (TPMT).</title>
        <authorList>
            <person name="Fessing M.Y."/>
            <person name="Belkov V.M."/>
            <person name="Krynetski E.Y."/>
            <person name="Evans W.E."/>
        </authorList>
    </citation>
    <scope>NUCLEOTIDE SEQUENCE [MRNA]</scope>
    <source>
        <strain>C3H/HeJ</strain>
    </source>
</reference>
<reference key="2">
    <citation type="submission" date="1997-12" db="EMBL/GenBank/DDBJ databases">
        <title>Mouse thiopurine methyltransferase pharmacogenetics: cDNA cloning and characterization and processed pseudogene cloning.</title>
        <authorList>
            <person name="Adjei A.A."/>
            <person name="Johnson G.B."/>
            <person name="Otterness D.M."/>
            <person name="Weinshilboum R.M."/>
        </authorList>
    </citation>
    <scope>NUCLEOTIDE SEQUENCE</scope>
    <source>
        <strain>C57BL/6J</strain>
        <strain>DBA/2J</strain>
    </source>
</reference>
<reference key="3">
    <citation type="journal article" date="2004" name="Genome Res.">
        <title>The status, quality, and expansion of the NIH full-length cDNA project: the Mammalian Gene Collection (MGC).</title>
        <authorList>
            <consortium name="The MGC Project Team"/>
        </authorList>
    </citation>
    <scope>NUCLEOTIDE SEQUENCE [LARGE SCALE MRNA]</scope>
    <source>
        <strain>FVB/N</strain>
        <tissue>Liver</tissue>
    </source>
</reference>
<reference key="4">
    <citation type="submission" date="1999-12" db="EMBL/GenBank/DDBJ databases">
        <authorList>
            <person name="Krynetski E.Y."/>
            <person name="Fessing M.Y."/>
            <person name="Edick M.J."/>
            <person name="Evans W.E."/>
        </authorList>
    </citation>
    <scope>NUCLEOTIDE SEQUENCE OF 43-227</scope>
    <source>
        <strain>129/Ola</strain>
    </source>
</reference>
<reference key="5">
    <citation type="journal article" date="2010" name="Cell">
        <title>A tissue-specific atlas of mouse protein phosphorylation and expression.</title>
        <authorList>
            <person name="Huttlin E.L."/>
            <person name="Jedrychowski M.P."/>
            <person name="Elias J.E."/>
            <person name="Goswami T."/>
            <person name="Rad R."/>
            <person name="Beausoleil S.A."/>
            <person name="Villen J."/>
            <person name="Haas W."/>
            <person name="Sowa M.E."/>
            <person name="Gygi S.P."/>
        </authorList>
    </citation>
    <scope>PHOSPHORYLATION [LARGE SCALE ANALYSIS] AT SER-34</scope>
    <scope>IDENTIFICATION BY MASS SPECTROMETRY [LARGE SCALE ANALYSIS]</scope>
    <source>
        <tissue>Brain</tissue>
        <tissue>Brown adipose tissue</tissue>
        <tissue>Heart</tissue>
        <tissue>Kidney</tissue>
        <tissue>Liver</tissue>
        <tissue>Lung</tissue>
        <tissue>Pancreas</tissue>
        <tissue>Spleen</tissue>
        <tissue>Testis</tissue>
    </source>
</reference>
<reference key="6">
    <citation type="journal article" date="2008" name="Biochemistry">
        <title>Structural basis of substrate recognition in thiopurine S-methyltransferase.</title>
        <authorList>
            <person name="Peng Y."/>
            <person name="Feng Q."/>
            <person name="Wilk D."/>
            <person name="Adjei A.A."/>
            <person name="Salavaggione O.E."/>
            <person name="Weinshilboum R.M."/>
            <person name="Yee V.C."/>
        </authorList>
    </citation>
    <scope>X-RAY CRYSTALLOGRAPHY (1.8 ANGSTROMS) IN COMPLEXES WITH S-ADENOSYL-L-HOMOCYSTEINE AND 6-MERCAPTOPURINE</scope>
    <scope>FUNCTION</scope>
    <scope>CATALYTIC ACTIVITY</scope>
    <scope>SUBUNIT</scope>
</reference>
<organism>
    <name type="scientific">Mus musculus</name>
    <name type="common">Mouse</name>
    <dbReference type="NCBI Taxonomy" id="10090"/>
    <lineage>
        <taxon>Eukaryota</taxon>
        <taxon>Metazoa</taxon>
        <taxon>Chordata</taxon>
        <taxon>Craniata</taxon>
        <taxon>Vertebrata</taxon>
        <taxon>Euteleostomi</taxon>
        <taxon>Mammalia</taxon>
        <taxon>Eutheria</taxon>
        <taxon>Euarchontoglires</taxon>
        <taxon>Glires</taxon>
        <taxon>Rodentia</taxon>
        <taxon>Myomorpha</taxon>
        <taxon>Muroidea</taxon>
        <taxon>Muridae</taxon>
        <taxon>Murinae</taxon>
        <taxon>Mus</taxon>
        <taxon>Mus</taxon>
    </lineage>
</organism>
<name>TPMT_MOUSE</name>
<accession>O55060</accession>
<accession>Q9JIL7</accession>
<accession>Q9QUG7</accession>
<gene>
    <name type="primary">Tpmt</name>
</gene>
<dbReference type="EC" id="2.1.1.67" evidence="2"/>
<dbReference type="EMBL" id="AF046887">
    <property type="protein sequence ID" value="AAC25919.1"/>
    <property type="molecule type" value="mRNA"/>
</dbReference>
<dbReference type="EMBL" id="AF037043">
    <property type="protein sequence ID" value="AAD02092.1"/>
    <property type="molecule type" value="mRNA"/>
</dbReference>
<dbReference type="EMBL" id="AF037044">
    <property type="protein sequence ID" value="AAD02093.1"/>
    <property type="molecule type" value="mRNA"/>
</dbReference>
<dbReference type="EMBL" id="AF104832">
    <property type="protein sequence ID" value="AAF06075.1"/>
    <property type="molecule type" value="Genomic_DNA"/>
</dbReference>
<dbReference type="EMBL" id="AF104825">
    <property type="protein sequence ID" value="AAF06075.1"/>
    <property type="status" value="JOINED"/>
    <property type="molecule type" value="Genomic_DNA"/>
</dbReference>
<dbReference type="EMBL" id="AF104826">
    <property type="protein sequence ID" value="AAF06075.1"/>
    <property type="status" value="JOINED"/>
    <property type="molecule type" value="Genomic_DNA"/>
</dbReference>
<dbReference type="EMBL" id="AF104827">
    <property type="protein sequence ID" value="AAF06075.1"/>
    <property type="status" value="JOINED"/>
    <property type="molecule type" value="Genomic_DNA"/>
</dbReference>
<dbReference type="EMBL" id="AF104828">
    <property type="protein sequence ID" value="AAF06075.1"/>
    <property type="status" value="JOINED"/>
    <property type="molecule type" value="Genomic_DNA"/>
</dbReference>
<dbReference type="EMBL" id="AF104829">
    <property type="protein sequence ID" value="AAF06075.1"/>
    <property type="status" value="JOINED"/>
    <property type="molecule type" value="Genomic_DNA"/>
</dbReference>
<dbReference type="EMBL" id="AF104830">
    <property type="protein sequence ID" value="AAF06075.1"/>
    <property type="status" value="JOINED"/>
    <property type="molecule type" value="Genomic_DNA"/>
</dbReference>
<dbReference type="EMBL" id="AF104831">
    <property type="protein sequence ID" value="AAF06075.1"/>
    <property type="status" value="JOINED"/>
    <property type="molecule type" value="Genomic_DNA"/>
</dbReference>
<dbReference type="EMBL" id="BC021598">
    <property type="protein sequence ID" value="AAH21598.1"/>
    <property type="molecule type" value="mRNA"/>
</dbReference>
<dbReference type="EMBL" id="AH009424">
    <property type="protein sequence ID" value="AAF74424.1"/>
    <property type="molecule type" value="Genomic_DNA"/>
</dbReference>
<dbReference type="CCDS" id="CCDS26488.1"/>
<dbReference type="RefSeq" id="NP_058065.2">
    <property type="nucleotide sequence ID" value="NM_016785.2"/>
</dbReference>
<dbReference type="RefSeq" id="XP_006516989.1">
    <property type="nucleotide sequence ID" value="XM_006516926.2"/>
</dbReference>
<dbReference type="PDB" id="2GB4">
    <property type="method" value="X-ray"/>
    <property type="resolution" value="1.25 A"/>
    <property type="chains" value="A/B=1-240"/>
</dbReference>
<dbReference type="PDB" id="3BGD">
    <property type="method" value="X-ray"/>
    <property type="resolution" value="2.00 A"/>
    <property type="chains" value="A/B=1-240"/>
</dbReference>
<dbReference type="PDB" id="3BGI">
    <property type="method" value="X-ray"/>
    <property type="resolution" value="1.80 A"/>
    <property type="chains" value="A/B=1-240"/>
</dbReference>
<dbReference type="PDBsum" id="2GB4"/>
<dbReference type="PDBsum" id="3BGD"/>
<dbReference type="PDBsum" id="3BGI"/>
<dbReference type="SMR" id="O55060"/>
<dbReference type="FunCoup" id="O55060">
    <property type="interactions" value="140"/>
</dbReference>
<dbReference type="STRING" id="10090.ENSMUSP00000021806"/>
<dbReference type="iPTMnet" id="O55060"/>
<dbReference type="PhosphoSitePlus" id="O55060"/>
<dbReference type="jPOST" id="O55060"/>
<dbReference type="PaxDb" id="10090-ENSMUSP00000021806"/>
<dbReference type="PeptideAtlas" id="O55060"/>
<dbReference type="ProteomicsDB" id="259168"/>
<dbReference type="Pumba" id="O55060"/>
<dbReference type="DNASU" id="22017"/>
<dbReference type="GeneID" id="22017"/>
<dbReference type="KEGG" id="mmu:22017"/>
<dbReference type="UCSC" id="uc007qhq.2">
    <property type="organism name" value="mouse"/>
</dbReference>
<dbReference type="AGR" id="MGI:98812"/>
<dbReference type="CTD" id="7172"/>
<dbReference type="MGI" id="MGI:98812">
    <property type="gene designation" value="Tpmt"/>
</dbReference>
<dbReference type="eggNOG" id="ENOG502QSF5">
    <property type="taxonomic scope" value="Eukaryota"/>
</dbReference>
<dbReference type="InParanoid" id="O55060"/>
<dbReference type="OrthoDB" id="276151at2759"/>
<dbReference type="PhylomeDB" id="O55060"/>
<dbReference type="TreeFam" id="TF328951"/>
<dbReference type="BRENDA" id="2.1.1.67">
    <property type="organism ID" value="3474"/>
</dbReference>
<dbReference type="Reactome" id="R-MMU-156581">
    <property type="pathway name" value="Methylation"/>
</dbReference>
<dbReference type="Reactome" id="R-MMU-9748787">
    <property type="pathway name" value="Azathioprine ADME"/>
</dbReference>
<dbReference type="SABIO-RK" id="O55060"/>
<dbReference type="BioGRID-ORCS" id="22017">
    <property type="hits" value="3 hits in 78 CRISPR screens"/>
</dbReference>
<dbReference type="ChiTaRS" id="Tpmt">
    <property type="organism name" value="mouse"/>
</dbReference>
<dbReference type="EvolutionaryTrace" id="O55060"/>
<dbReference type="PRO" id="PR:O55060"/>
<dbReference type="Proteomes" id="UP000000589">
    <property type="component" value="Unplaced"/>
</dbReference>
<dbReference type="RNAct" id="O55060">
    <property type="molecule type" value="protein"/>
</dbReference>
<dbReference type="GO" id="GO:0005737">
    <property type="term" value="C:cytoplasm"/>
    <property type="evidence" value="ECO:0007669"/>
    <property type="project" value="UniProtKB-SubCell"/>
</dbReference>
<dbReference type="GO" id="GO:0008119">
    <property type="term" value="F:thiopurine S-methyltransferase activity"/>
    <property type="evidence" value="ECO:0000314"/>
    <property type="project" value="MGI"/>
</dbReference>
<dbReference type="GO" id="GO:0032259">
    <property type="term" value="P:methylation"/>
    <property type="evidence" value="ECO:0007669"/>
    <property type="project" value="UniProtKB-KW"/>
</dbReference>
<dbReference type="FunFam" id="3.40.50.150:FF:000101">
    <property type="entry name" value="Thiopurine S-methyltransferase"/>
    <property type="match status" value="1"/>
</dbReference>
<dbReference type="Gene3D" id="3.40.50.150">
    <property type="entry name" value="Vaccinia Virus protein VP39"/>
    <property type="match status" value="1"/>
</dbReference>
<dbReference type="HAMAP" id="MF_00812">
    <property type="entry name" value="Thiopur_methtran"/>
    <property type="match status" value="1"/>
</dbReference>
<dbReference type="InterPro" id="IPR029063">
    <property type="entry name" value="SAM-dependent_MTases_sf"/>
</dbReference>
<dbReference type="InterPro" id="IPR025835">
    <property type="entry name" value="Thiopurine_S-MeTrfase"/>
</dbReference>
<dbReference type="InterPro" id="IPR008854">
    <property type="entry name" value="TPMT"/>
</dbReference>
<dbReference type="PANTHER" id="PTHR10259">
    <property type="entry name" value="THIOPURINE S-METHYLTRANSFERASE"/>
    <property type="match status" value="1"/>
</dbReference>
<dbReference type="PANTHER" id="PTHR10259:SF11">
    <property type="entry name" value="THIOPURINE S-METHYLTRANSFERASE"/>
    <property type="match status" value="1"/>
</dbReference>
<dbReference type="Pfam" id="PF05724">
    <property type="entry name" value="TPMT"/>
    <property type="match status" value="1"/>
</dbReference>
<dbReference type="PIRSF" id="PIRSF023956">
    <property type="entry name" value="Thiopurine_S-methyltransferase"/>
    <property type="match status" value="1"/>
</dbReference>
<dbReference type="SUPFAM" id="SSF53335">
    <property type="entry name" value="S-adenosyl-L-methionine-dependent methyltransferases"/>
    <property type="match status" value="1"/>
</dbReference>
<dbReference type="PROSITE" id="PS51585">
    <property type="entry name" value="SAM_MT_TPMT"/>
    <property type="match status" value="1"/>
</dbReference>
<protein>
    <recommendedName>
        <fullName evidence="3">Thiopurine S-methyltransferase</fullName>
        <ecNumber evidence="2">2.1.1.67</ecNumber>
    </recommendedName>
    <alternativeName>
        <fullName>Thiopurine methyltransferase</fullName>
    </alternativeName>
</protein>
<evidence type="ECO:0000250" key="1">
    <source>
        <dbReference type="UniProtKB" id="P51580"/>
    </source>
</evidence>
<evidence type="ECO:0000269" key="2">
    <source>
    </source>
</evidence>
<evidence type="ECO:0000303" key="3">
    <source>
    </source>
</evidence>
<evidence type="ECO:0000305" key="4"/>
<evidence type="ECO:0007744" key="5">
    <source>
    </source>
</evidence>
<evidence type="ECO:0007829" key="6">
    <source>
        <dbReference type="PDB" id="2GB4"/>
    </source>
</evidence>
<evidence type="ECO:0007829" key="7">
    <source>
        <dbReference type="PDB" id="3BGD"/>
    </source>
</evidence>
<evidence type="ECO:0007829" key="8">
    <source>
        <dbReference type="PDB" id="3BGI"/>
    </source>
</evidence>
<sequence length="240" mass="27586">MSLDMKEHPDAEVQKNQVLTLEDWKEKWVTRHISFHQEQGHQLLKKHLDTFLKGQSGLRVFFPLCGKAIEMKWFADRGHTVVGVEISEIGIREFFAEQNLSYTEEPLAEIAGAKVFKSSSGSISLYCCSIFDLPRANIGKFDRIWDRGALVAINPGDHDRYADIILSLLRKEFQYLVAVLSYDPTKHAGPPFYVPSAELKRLFGTKCSMQCLEEVDALEERHKAWGLDYLFEKLYLLTEK</sequence>